<dbReference type="EMBL" id="AE014075">
    <property type="protein sequence ID" value="AAN82756.1"/>
    <property type="status" value="ALT_INIT"/>
    <property type="molecule type" value="Genomic_DNA"/>
</dbReference>
<dbReference type="RefSeq" id="WP_001298717.1">
    <property type="nucleotide sequence ID" value="NZ_CP051263.1"/>
</dbReference>
<dbReference type="SMR" id="P0AET3"/>
<dbReference type="STRING" id="199310.c4320"/>
<dbReference type="GeneID" id="93778476"/>
<dbReference type="KEGG" id="ecc:c4320"/>
<dbReference type="eggNOG" id="ENOG50334GK">
    <property type="taxonomic scope" value="Bacteria"/>
</dbReference>
<dbReference type="HOGENOM" id="CLU_149189_1_0_6"/>
<dbReference type="Proteomes" id="UP000001410">
    <property type="component" value="Chromosome"/>
</dbReference>
<dbReference type="GO" id="GO:0042597">
    <property type="term" value="C:periplasmic space"/>
    <property type="evidence" value="ECO:0007669"/>
    <property type="project" value="UniProtKB-SubCell"/>
</dbReference>
<dbReference type="GO" id="GO:0051082">
    <property type="term" value="F:unfolded protein binding"/>
    <property type="evidence" value="ECO:0007669"/>
    <property type="project" value="InterPro"/>
</dbReference>
<dbReference type="GO" id="GO:1990451">
    <property type="term" value="P:cellular stress response to acidic pH"/>
    <property type="evidence" value="ECO:0007669"/>
    <property type="project" value="UniProtKB-UniRule"/>
</dbReference>
<dbReference type="FunFam" id="1.10.890.10:FF:000002">
    <property type="entry name" value="Acid stress chaperone HdeB"/>
    <property type="match status" value="1"/>
</dbReference>
<dbReference type="Gene3D" id="1.10.890.10">
    <property type="entry name" value="HNS-dependent expression A"/>
    <property type="match status" value="1"/>
</dbReference>
<dbReference type="HAMAP" id="MF_00947">
    <property type="entry name" value="HdeB"/>
    <property type="match status" value="1"/>
</dbReference>
<dbReference type="InterPro" id="IPR038303">
    <property type="entry name" value="HdeA/HdeB_sf"/>
</dbReference>
<dbReference type="InterPro" id="IPR028623">
    <property type="entry name" value="HdeB"/>
</dbReference>
<dbReference type="InterPro" id="IPR010486">
    <property type="entry name" value="HNS-dep_expression_A/B"/>
</dbReference>
<dbReference type="NCBIfam" id="NF008599">
    <property type="entry name" value="PRK11566.1"/>
    <property type="match status" value="1"/>
</dbReference>
<dbReference type="Pfam" id="PF06411">
    <property type="entry name" value="HdeA"/>
    <property type="match status" value="1"/>
</dbReference>
<comment type="function">
    <text evidence="2">Required for optimal acid stress protection, which is important for survival of enteric bacteria in the acidic environment of the host stomach. Exhibits a chaperone-like activity at acidic pH by preventing the aggregation of many different periplasmic proteins.</text>
</comment>
<comment type="subcellular location">
    <subcellularLocation>
        <location evidence="2">Periplasm</location>
    </subcellularLocation>
</comment>
<comment type="similarity">
    <text evidence="2">Belongs to the HdeB family.</text>
</comment>
<comment type="sequence caution" evidence="3">
    <conflict type="erroneous initiation">
        <sequence resource="EMBL-CDS" id="AAN82756"/>
    </conflict>
    <text>Extended N-terminus.</text>
</comment>
<accession>P0AET3</accession>
<accession>P26605</accession>
<keyword id="KW-0007">Acetylation</keyword>
<keyword id="KW-0143">Chaperone</keyword>
<keyword id="KW-0574">Periplasm</keyword>
<keyword id="KW-1185">Reference proteome</keyword>
<keyword id="KW-0732">Signal</keyword>
<protein>
    <recommendedName>
        <fullName evidence="2">Acid stress chaperone HdeB</fullName>
    </recommendedName>
</protein>
<proteinExistence type="inferred from homology"/>
<sequence length="108" mass="12043">MNISSLRKAFIFMGAVAALSLVNAQSALAANESAKDMTCQEFIDLNPKAMTPVAWWMLHEETVYKGGDTVTLNETDLTQIPKVIEYCKKNPQKNLYTFKNQASNDLPN</sequence>
<organism>
    <name type="scientific">Escherichia coli O6:H1 (strain CFT073 / ATCC 700928 / UPEC)</name>
    <dbReference type="NCBI Taxonomy" id="199310"/>
    <lineage>
        <taxon>Bacteria</taxon>
        <taxon>Pseudomonadati</taxon>
        <taxon>Pseudomonadota</taxon>
        <taxon>Gammaproteobacteria</taxon>
        <taxon>Enterobacterales</taxon>
        <taxon>Enterobacteriaceae</taxon>
        <taxon>Escherichia</taxon>
    </lineage>
</organism>
<gene>
    <name evidence="2" type="primary">hdeB</name>
    <name type="ordered locus">c4320</name>
</gene>
<reference key="1">
    <citation type="journal article" date="2002" name="Proc. Natl. Acad. Sci. U.S.A.">
        <title>Extensive mosaic structure revealed by the complete genome sequence of uropathogenic Escherichia coli.</title>
        <authorList>
            <person name="Welch R.A."/>
            <person name="Burland V."/>
            <person name="Plunkett G. III"/>
            <person name="Redford P."/>
            <person name="Roesch P."/>
            <person name="Rasko D."/>
            <person name="Buckles E.L."/>
            <person name="Liou S.-R."/>
            <person name="Boutin A."/>
            <person name="Hackett J."/>
            <person name="Stroud D."/>
            <person name="Mayhew G.F."/>
            <person name="Rose D.J."/>
            <person name="Zhou S."/>
            <person name="Schwartz D.C."/>
            <person name="Perna N.T."/>
            <person name="Mobley H.L.T."/>
            <person name="Donnenberg M.S."/>
            <person name="Blattner F.R."/>
        </authorList>
    </citation>
    <scope>NUCLEOTIDE SEQUENCE [LARGE SCALE GENOMIC DNA]</scope>
    <source>
        <strain>CFT073 / ATCC 700928 / UPEC</strain>
    </source>
</reference>
<feature type="signal peptide" evidence="2">
    <location>
        <begin position="1"/>
        <end position="29"/>
    </location>
</feature>
<feature type="chain" id="PRO_0000045102" description="Acid stress chaperone HdeB">
    <location>
        <begin position="30"/>
        <end position="108"/>
    </location>
</feature>
<feature type="modified residue" description="N6-acetyllysine" evidence="1">
    <location>
        <position position="93"/>
    </location>
</feature>
<name>HDEB_ECOL6</name>
<evidence type="ECO:0000250" key="1"/>
<evidence type="ECO:0000255" key="2">
    <source>
        <dbReference type="HAMAP-Rule" id="MF_00947"/>
    </source>
</evidence>
<evidence type="ECO:0000305" key="3"/>